<accession>O28426</accession>
<sequence>MKKSGWLVVALIALVVLGVVTSIAVNVYFKDKLVQGITVQMEDEGGKPISANLIINELTDEGPKKIWSGSGPGIVATSLILPKEEVNTFEINGEKIRVYRSINLEVIAYTEGKMGVAIFSVDPARPEHKSVKIVLRDVPKTKSEPTPGVWTTYEFTPVLKFATWDDIFAKYGYPRGAKIRIESKTRPYGSPTWVSGYTEVTLDSGLFSPYLSGKNKYTVYFQIKYVYAITELEMGEEKIYYERVYAVDTNTDPVAGYRDYVSWHGNLPANYDEYYITPAGDTREIAITGGHDYAFSVSVGFSYPAGITVALGVTKVPSPPATLSVTSTRSDGWVKTAGFNGFIESYSNWI</sequence>
<protein>
    <recommendedName>
        <fullName>Uncharacterized protein AF_1852</fullName>
    </recommendedName>
</protein>
<keyword id="KW-1185">Reference proteome</keyword>
<keyword id="KW-0732">Signal</keyword>
<evidence type="ECO:0000255" key="1"/>
<name>Y1852_ARCFU</name>
<dbReference type="EMBL" id="AE000782">
    <property type="protein sequence ID" value="AAB89405.1"/>
    <property type="molecule type" value="Genomic_DNA"/>
</dbReference>
<dbReference type="PIR" id="C69481">
    <property type="entry name" value="C69481"/>
</dbReference>
<dbReference type="PaxDb" id="224325-AF_1852"/>
<dbReference type="EnsemblBacteria" id="AAB89405">
    <property type="protein sequence ID" value="AAB89405"/>
    <property type="gene ID" value="AF_1852"/>
</dbReference>
<dbReference type="KEGG" id="afu:AF_1852"/>
<dbReference type="HOGENOM" id="CLU_791318_0_0_2"/>
<dbReference type="Proteomes" id="UP000002199">
    <property type="component" value="Chromosome"/>
</dbReference>
<gene>
    <name type="ordered locus">AF_1852</name>
</gene>
<reference key="1">
    <citation type="journal article" date="1997" name="Nature">
        <title>The complete genome sequence of the hyperthermophilic, sulphate-reducing archaeon Archaeoglobus fulgidus.</title>
        <authorList>
            <person name="Klenk H.-P."/>
            <person name="Clayton R.A."/>
            <person name="Tomb J.-F."/>
            <person name="White O."/>
            <person name="Nelson K.E."/>
            <person name="Ketchum K.A."/>
            <person name="Dodson R.J."/>
            <person name="Gwinn M.L."/>
            <person name="Hickey E.K."/>
            <person name="Peterson J.D."/>
            <person name="Richardson D.L."/>
            <person name="Kerlavage A.R."/>
            <person name="Graham D.E."/>
            <person name="Kyrpides N.C."/>
            <person name="Fleischmann R.D."/>
            <person name="Quackenbush J."/>
            <person name="Lee N.H."/>
            <person name="Sutton G.G."/>
            <person name="Gill S.R."/>
            <person name="Kirkness E.F."/>
            <person name="Dougherty B.A."/>
            <person name="McKenney K."/>
            <person name="Adams M.D."/>
            <person name="Loftus B.J."/>
            <person name="Peterson S.N."/>
            <person name="Reich C.I."/>
            <person name="McNeil L.K."/>
            <person name="Badger J.H."/>
            <person name="Glodek A."/>
            <person name="Zhou L."/>
            <person name="Overbeek R."/>
            <person name="Gocayne J.D."/>
            <person name="Weidman J.F."/>
            <person name="McDonald L.A."/>
            <person name="Utterback T.R."/>
            <person name="Cotton M.D."/>
            <person name="Spriggs T."/>
            <person name="Artiach P."/>
            <person name="Kaine B.P."/>
            <person name="Sykes S.M."/>
            <person name="Sadow P.W."/>
            <person name="D'Andrea K.P."/>
            <person name="Bowman C."/>
            <person name="Fujii C."/>
            <person name="Garland S.A."/>
            <person name="Mason T.M."/>
            <person name="Olsen G.J."/>
            <person name="Fraser C.M."/>
            <person name="Smith H.O."/>
            <person name="Woese C.R."/>
            <person name="Venter J.C."/>
        </authorList>
    </citation>
    <scope>NUCLEOTIDE SEQUENCE [LARGE SCALE GENOMIC DNA]</scope>
    <source>
        <strain>ATCC 49558 / DSM 4304 / JCM 9628 / NBRC 100126 / VC-16</strain>
    </source>
</reference>
<organism>
    <name type="scientific">Archaeoglobus fulgidus (strain ATCC 49558 / DSM 4304 / JCM 9628 / NBRC 100126 / VC-16)</name>
    <dbReference type="NCBI Taxonomy" id="224325"/>
    <lineage>
        <taxon>Archaea</taxon>
        <taxon>Methanobacteriati</taxon>
        <taxon>Methanobacteriota</taxon>
        <taxon>Archaeoglobi</taxon>
        <taxon>Archaeoglobales</taxon>
        <taxon>Archaeoglobaceae</taxon>
        <taxon>Archaeoglobus</taxon>
    </lineage>
</organism>
<proteinExistence type="inferred from homology"/>
<feature type="signal peptide" evidence="1">
    <location>
        <begin position="1"/>
        <end position="26"/>
    </location>
</feature>
<feature type="chain" id="PRO_0000013673" description="Uncharacterized protein AF_1852">
    <location>
        <begin position="27"/>
        <end position="350"/>
    </location>
</feature>